<feature type="chain" id="PRO_1000079028" description="ATP-dependent Clp protease adapter protein ClpS">
    <location>
        <begin position="1"/>
        <end position="102"/>
    </location>
</feature>
<dbReference type="EMBL" id="CP000931">
    <property type="protein sequence ID" value="ABZ76286.1"/>
    <property type="molecule type" value="Genomic_DNA"/>
</dbReference>
<dbReference type="RefSeq" id="WP_012276822.1">
    <property type="nucleotide sequence ID" value="NC_010334.1"/>
</dbReference>
<dbReference type="SMR" id="B0TQ07"/>
<dbReference type="STRING" id="458817.Shal_1720"/>
<dbReference type="KEGG" id="shl:Shal_1720"/>
<dbReference type="eggNOG" id="COG2127">
    <property type="taxonomic scope" value="Bacteria"/>
</dbReference>
<dbReference type="HOGENOM" id="CLU_134358_2_1_6"/>
<dbReference type="OrthoDB" id="9796121at2"/>
<dbReference type="Proteomes" id="UP000001317">
    <property type="component" value="Chromosome"/>
</dbReference>
<dbReference type="GO" id="GO:0030163">
    <property type="term" value="P:protein catabolic process"/>
    <property type="evidence" value="ECO:0007669"/>
    <property type="project" value="InterPro"/>
</dbReference>
<dbReference type="GO" id="GO:0006508">
    <property type="term" value="P:proteolysis"/>
    <property type="evidence" value="ECO:0007669"/>
    <property type="project" value="UniProtKB-UniRule"/>
</dbReference>
<dbReference type="FunFam" id="3.30.1390.10:FF:000002">
    <property type="entry name" value="ATP-dependent Clp protease adapter protein ClpS"/>
    <property type="match status" value="1"/>
</dbReference>
<dbReference type="Gene3D" id="3.30.1390.10">
    <property type="match status" value="1"/>
</dbReference>
<dbReference type="HAMAP" id="MF_00302">
    <property type="entry name" value="ClpS"/>
    <property type="match status" value="1"/>
</dbReference>
<dbReference type="InterPro" id="IPR022935">
    <property type="entry name" value="ClpS"/>
</dbReference>
<dbReference type="InterPro" id="IPR003769">
    <property type="entry name" value="ClpS_core"/>
</dbReference>
<dbReference type="InterPro" id="IPR014719">
    <property type="entry name" value="Ribosomal_bL12_C/ClpS-like"/>
</dbReference>
<dbReference type="NCBIfam" id="NF000670">
    <property type="entry name" value="PRK00033.1-3"/>
    <property type="match status" value="1"/>
</dbReference>
<dbReference type="NCBIfam" id="NF000672">
    <property type="entry name" value="PRK00033.1-5"/>
    <property type="match status" value="1"/>
</dbReference>
<dbReference type="PANTHER" id="PTHR33473:SF19">
    <property type="entry name" value="ATP-DEPENDENT CLP PROTEASE ADAPTER PROTEIN CLPS"/>
    <property type="match status" value="1"/>
</dbReference>
<dbReference type="PANTHER" id="PTHR33473">
    <property type="entry name" value="ATP-DEPENDENT CLP PROTEASE ADAPTER PROTEIN CLPS1, CHLOROPLASTIC"/>
    <property type="match status" value="1"/>
</dbReference>
<dbReference type="Pfam" id="PF02617">
    <property type="entry name" value="ClpS"/>
    <property type="match status" value="1"/>
</dbReference>
<dbReference type="SUPFAM" id="SSF54736">
    <property type="entry name" value="ClpS-like"/>
    <property type="match status" value="1"/>
</dbReference>
<name>CLPS_SHEHH</name>
<protein>
    <recommendedName>
        <fullName evidence="1">ATP-dependent Clp protease adapter protein ClpS</fullName>
    </recommendedName>
</protein>
<accession>B0TQ07</accession>
<organism>
    <name type="scientific">Shewanella halifaxensis (strain HAW-EB4)</name>
    <dbReference type="NCBI Taxonomy" id="458817"/>
    <lineage>
        <taxon>Bacteria</taxon>
        <taxon>Pseudomonadati</taxon>
        <taxon>Pseudomonadota</taxon>
        <taxon>Gammaproteobacteria</taxon>
        <taxon>Alteromonadales</taxon>
        <taxon>Shewanellaceae</taxon>
        <taxon>Shewanella</taxon>
    </lineage>
</organism>
<sequence>MSRTENIEQIEESVEAEFKQPSMYKVILNNDDYTPMDFVIEILQLFFKKDEQQATEIMLAIHHKGKGICGIYPFGIAETKVAQVNQFARQNQHPLLCSLEEA</sequence>
<proteinExistence type="inferred from homology"/>
<gene>
    <name evidence="1" type="primary">clpS</name>
    <name type="ordered locus">Shal_1720</name>
</gene>
<evidence type="ECO:0000255" key="1">
    <source>
        <dbReference type="HAMAP-Rule" id="MF_00302"/>
    </source>
</evidence>
<reference key="1">
    <citation type="submission" date="2008-01" db="EMBL/GenBank/DDBJ databases">
        <title>Complete sequence of Shewanella halifaxensis HAW-EB4.</title>
        <authorList>
            <consortium name="US DOE Joint Genome Institute"/>
            <person name="Copeland A."/>
            <person name="Lucas S."/>
            <person name="Lapidus A."/>
            <person name="Glavina del Rio T."/>
            <person name="Dalin E."/>
            <person name="Tice H."/>
            <person name="Bruce D."/>
            <person name="Goodwin L."/>
            <person name="Pitluck S."/>
            <person name="Sims D."/>
            <person name="Brettin T."/>
            <person name="Detter J.C."/>
            <person name="Han C."/>
            <person name="Kuske C.R."/>
            <person name="Schmutz J."/>
            <person name="Larimer F."/>
            <person name="Land M."/>
            <person name="Hauser L."/>
            <person name="Kyrpides N."/>
            <person name="Kim E."/>
            <person name="Zhao J.-S."/>
            <person name="Richardson P."/>
        </authorList>
    </citation>
    <scope>NUCLEOTIDE SEQUENCE [LARGE SCALE GENOMIC DNA]</scope>
    <source>
        <strain>HAW-EB4</strain>
    </source>
</reference>
<comment type="function">
    <text evidence="1">Involved in the modulation of the specificity of the ClpAP-mediated ATP-dependent protein degradation.</text>
</comment>
<comment type="subunit">
    <text evidence="1">Binds to the N-terminal domain of the chaperone ClpA.</text>
</comment>
<comment type="similarity">
    <text evidence="1">Belongs to the ClpS family.</text>
</comment>